<keyword id="KW-0963">Cytoplasm</keyword>
<keyword id="KW-0238">DNA-binding</keyword>
<keyword id="KW-1017">Isopeptide bond</keyword>
<keyword id="KW-0446">Lipid-binding</keyword>
<keyword id="KW-0449">Lipoprotein</keyword>
<keyword id="KW-0479">Metal-binding</keyword>
<keyword id="KW-0539">Nucleus</keyword>
<keyword id="KW-0564">Palmitate</keyword>
<keyword id="KW-0597">Phosphoprotein</keyword>
<keyword id="KW-0675">Receptor</keyword>
<keyword id="KW-1185">Reference proteome</keyword>
<keyword id="KW-0754">Steroid-binding</keyword>
<keyword id="KW-0804">Transcription</keyword>
<keyword id="KW-0805">Transcription regulation</keyword>
<keyword id="KW-0832">Ubl conjugation</keyword>
<keyword id="KW-0862">Zinc</keyword>
<keyword id="KW-0863">Zinc-finger</keyword>
<sequence>MEVQLGLGRVYPRPPSKTYRGAFQNLFQSVREVIQNPGPRHPEAVSAAPPGAHLQQQQQQQQQQETSPRQQQQQQQGDDGSPQAQSRGPTGYLALDEEQQPSQQRSASKGHPESACVPEPGVTSATGKGLQQQQPAPPDENDSAAPSTLSLLGPTFPGLSSCSTDLKDILSEAGTMQLLQQQRQQQQQQQQQQQQQQQQQQQEVVSEGSSSGRAREAAGASTSSKDSYLGGSSTISDSAKELCKAVSVSMGLGVEALEHLSPGEQLRGDCMYAPLLGGPPAVRPCAPLAECKGSLLDDGPGKGTEETAEYSPFKAGYAKGLDGDSLGCSSSSEAGGSGTLEMPSTLSLYKSGALDEAAAYQSRDYYNFPLSLGGPPPHPPPPHPHTRIKLENPLDYGSAWAAAAAQCRYGDLASLHGAGAAGPSSGSPSATTSSSWHTLFTAEEGQLYGPCGGSGGGSAGDGGSVAPYGYTRPPQGLAGQEGDFPPPDVWYPGGVVSRVPFPSPSCVKSEMGSWMESYSGPYGDMRLETARDHVLPIDYYFPPQKTCLICGDEASGCHYGALTCGSCKVFFKRAAEGKQKYLCASRNDCTIDKFRRKNCPSCRLRKCYEAGMTLGARKLKKLGNLKLQEEGEASNVTSPTEEPTQKLTVSHIEGYECQPIFLNVLEAIEPGVVCAGHDNNQPDSFAALLSSLNELGERQLVHVVKWAKALPGFRNLHVDDQMAVIQYSWMGLMVFAMGWRSFTNVNSRMLYFAPDLVFNEYRMHKSRMYSQCVRMRHLSQEFGWLQITPQEFLCMKALLLFSIIPVDGLKNQKFFDELRMNYIKELDRIIACKRKNPTSCSRRFYQLTKLLDSVQPIARELHQFTFDLLIKSHMVSVDFPEMMAEIISVQVPKILSGKVKPIYFHTQ</sequence>
<accession>Q9TT90</accession>
<accession>Q6WSP7</accession>
<feature type="chain" id="PRO_0000053701" description="Androgen receptor">
    <location>
        <begin position="1"/>
        <end position="907"/>
    </location>
</feature>
<feature type="domain" description="NR LBD" evidence="6">
    <location>
        <begin position="656"/>
        <end position="887"/>
    </location>
</feature>
<feature type="DNA-binding region" description="Nuclear receptor" evidence="5">
    <location>
        <begin position="546"/>
        <end position="619"/>
    </location>
</feature>
<feature type="zinc finger region" description="NR C4-type" evidence="5">
    <location>
        <begin position="547"/>
        <end position="567"/>
    </location>
</feature>
<feature type="zinc finger region" description="NR C4-type" evidence="5">
    <location>
        <begin position="583"/>
        <end position="607"/>
    </location>
</feature>
<feature type="region of interest" description="Interaction with ZNF318" evidence="4">
    <location>
        <begin position="1"/>
        <end position="574"/>
    </location>
</feature>
<feature type="region of interest" description="Modulating" evidence="1">
    <location>
        <begin position="1"/>
        <end position="545"/>
    </location>
</feature>
<feature type="region of interest" description="Disordered" evidence="7">
    <location>
        <begin position="36"/>
        <end position="152"/>
    </location>
</feature>
<feature type="region of interest" description="Disordered" evidence="7">
    <location>
        <begin position="200"/>
        <end position="231"/>
    </location>
</feature>
<feature type="region of interest" description="Interaction with LPXN" evidence="2">
    <location>
        <begin position="539"/>
        <end position="906"/>
    </location>
</feature>
<feature type="region of interest" description="Interaction with HIPK3" evidence="3">
    <location>
        <begin position="559"/>
        <end position="649"/>
    </location>
</feature>
<feature type="region of interest" description="Interaction with CCAR1" evidence="2">
    <location>
        <begin position="579"/>
        <end position="906"/>
    </location>
</feature>
<feature type="region of interest" description="Interaction with KAT7" evidence="2">
    <location>
        <begin position="612"/>
        <end position="906"/>
    </location>
</feature>
<feature type="compositionally biased region" description="Low complexity" evidence="7">
    <location>
        <begin position="55"/>
        <end position="76"/>
    </location>
</feature>
<feature type="compositionally biased region" description="Polar residues" evidence="7">
    <location>
        <begin position="123"/>
        <end position="134"/>
    </location>
</feature>
<feature type="compositionally biased region" description="Low complexity" evidence="7">
    <location>
        <begin position="200"/>
        <end position="224"/>
    </location>
</feature>
<feature type="binding site" evidence="2">
    <location>
        <position position="693"/>
    </location>
    <ligand>
        <name>17beta-hydroxy-5alpha-androstan-3-one</name>
        <dbReference type="ChEBI" id="CHEBI:16330"/>
    </ligand>
</feature>
<feature type="binding site" evidence="2">
    <location>
        <position position="740"/>
    </location>
    <ligand>
        <name>17beta-hydroxy-5alpha-androstan-3-one</name>
        <dbReference type="ChEBI" id="CHEBI:16330"/>
    </ligand>
</feature>
<feature type="binding site" evidence="2">
    <location>
        <position position="865"/>
    </location>
    <ligand>
        <name>17beta-hydroxy-5alpha-androstan-3-one</name>
        <dbReference type="ChEBI" id="CHEBI:16330"/>
    </ligand>
</feature>
<feature type="site" description="Interaction with coactivator LXXL and FXXFY motifs" evidence="2">
    <location>
        <position position="708"/>
    </location>
</feature>
<feature type="site" description="Interaction with coactivator FXXLF and FXXFY motifs" evidence="2">
    <location>
        <position position="885"/>
    </location>
</feature>
<feature type="modified residue" description="Phosphoserine; by CDK9" evidence="2">
    <location>
        <position position="67"/>
    </location>
</feature>
<feature type="modified residue" description="Phosphoserine" evidence="2">
    <location>
        <position position="81"/>
    </location>
</feature>
<feature type="modified residue" description="Phosphotyrosine; by CSK" evidence="2">
    <location>
        <position position="228"/>
    </location>
</feature>
<feature type="modified residue" description="Phosphoserine" evidence="2">
    <location>
        <position position="261"/>
    </location>
</feature>
<feature type="modified residue" description="Phosphotyrosine; by CSK and TNK2" evidence="2">
    <location>
        <position position="272"/>
    </location>
</feature>
<feature type="modified residue" description="Phosphotyrosine; by CSK" evidence="2">
    <location>
        <position position="310"/>
    </location>
</feature>
<feature type="modified residue" description="Phosphotyrosine; by CSK" evidence="2">
    <location>
        <position position="349"/>
    </location>
</feature>
<feature type="modified residue" description="Phosphotyrosine; by CSK" evidence="2">
    <location>
        <position position="360"/>
    </location>
</feature>
<feature type="modified residue" description="Phosphotyrosine; by CSK" evidence="2">
    <location>
        <position position="365"/>
    </location>
</feature>
<feature type="modified residue" description="Phosphotyrosine; by CSK and TNK2" evidence="2">
    <location>
        <position position="366"/>
    </location>
</feature>
<feature type="modified residue" description="Phosphotyrosine; by CSK" evidence="2">
    <location>
        <position position="396"/>
    </location>
</feature>
<feature type="modified residue" description="Phosphotyrosine; by CSK" evidence="2">
    <location>
        <position position="522"/>
    </location>
</feature>
<feature type="modified residue" description="Phosphotyrosine; by CSK" evidence="2">
    <location>
        <position position="539"/>
    </location>
</feature>
<feature type="modified residue" description="Phosphoserine; by STK4/MST1" evidence="2">
    <location>
        <position position="638"/>
    </location>
</feature>
<feature type="modified residue" description="Phosphotyrosine; by CSK" evidence="2">
    <location>
        <position position="903"/>
    </location>
</feature>
<feature type="cross-link" description="Glycyl lysine isopeptide (Lys-Gly) (interchain with G-Cter in SUMO)" evidence="1">
    <location>
        <position position="389"/>
    </location>
</feature>
<feature type="cross-link" description="Glycyl lysine isopeptide (Lys-Gly) (interchain with G-Cter in SUMO)" evidence="1">
    <location>
        <position position="508"/>
    </location>
</feature>
<feature type="cross-link" description="Glycyl lysine isopeptide (Lys-Gly) (interchain with G-Cter in ubiquitin)" evidence="2">
    <location>
        <position position="833"/>
    </location>
</feature>
<feature type="cross-link" description="Glycyl lysine isopeptide (Lys-Gly) (interchain with G-Cter in ubiquitin)" evidence="2">
    <location>
        <position position="835"/>
    </location>
</feature>
<feature type="sequence conflict" description="In Ref. 2; AAQ84563." evidence="8" ref="2">
    <original>T</original>
    <variation>A</variation>
    <location>
        <position position="123"/>
    </location>
</feature>
<feature type="sequence conflict" description="In Ref. 2; AAQ84563." evidence="8" ref="2">
    <original>R</original>
    <variation>Q</variation>
    <location>
        <position position="183"/>
    </location>
</feature>
<feature type="sequence conflict" description="In Ref. 2; AAQ84563." evidence="8" ref="2">
    <original>Q</original>
    <variation>QQ</variation>
    <location>
        <position position="202"/>
    </location>
</feature>
<feature type="sequence conflict" description="In Ref. 2; AAQ84563." evidence="8" ref="2">
    <original>I</original>
    <variation>V</variation>
    <location>
        <position position="823"/>
    </location>
</feature>
<evidence type="ECO:0000250" key="1"/>
<evidence type="ECO:0000250" key="2">
    <source>
        <dbReference type="UniProtKB" id="P10275"/>
    </source>
</evidence>
<evidence type="ECO:0000250" key="3">
    <source>
        <dbReference type="UniProtKB" id="P15207"/>
    </source>
</evidence>
<evidence type="ECO:0000250" key="4">
    <source>
        <dbReference type="UniProtKB" id="P19091"/>
    </source>
</evidence>
<evidence type="ECO:0000255" key="5">
    <source>
        <dbReference type="PROSITE-ProRule" id="PRU00407"/>
    </source>
</evidence>
<evidence type="ECO:0000255" key="6">
    <source>
        <dbReference type="PROSITE-ProRule" id="PRU01189"/>
    </source>
</evidence>
<evidence type="ECO:0000256" key="7">
    <source>
        <dbReference type="SAM" id="MobiDB-lite"/>
    </source>
</evidence>
<evidence type="ECO:0000305" key="8"/>
<organism>
    <name type="scientific">Canis lupus familiaris</name>
    <name type="common">Dog</name>
    <name type="synonym">Canis familiaris</name>
    <dbReference type="NCBI Taxonomy" id="9615"/>
    <lineage>
        <taxon>Eukaryota</taxon>
        <taxon>Metazoa</taxon>
        <taxon>Chordata</taxon>
        <taxon>Craniata</taxon>
        <taxon>Vertebrata</taxon>
        <taxon>Euteleostomi</taxon>
        <taxon>Mammalia</taxon>
        <taxon>Eutheria</taxon>
        <taxon>Laurasiatheria</taxon>
        <taxon>Carnivora</taxon>
        <taxon>Caniformia</taxon>
        <taxon>Canidae</taxon>
        <taxon>Canis</taxon>
    </lineage>
</organism>
<protein>
    <recommendedName>
        <fullName>Androgen receptor</fullName>
    </recommendedName>
    <alternativeName>
        <fullName>Dihydrotestosterone receptor</fullName>
    </alternativeName>
    <alternativeName>
        <fullName>Nuclear receptor subfamily 3 group C member 4</fullName>
    </alternativeName>
</protein>
<reference key="1">
    <citation type="journal article" date="2001" name="Mol. Cell. Biochem.">
        <title>Molecular cloning and functional characterization of the canine androgen receptor.</title>
        <authorList>
            <person name="Lu B."/>
            <person name="Smock S.L."/>
            <person name="Castleberry T.A."/>
            <person name="Owen T.A."/>
        </authorList>
    </citation>
    <scope>NUCLEOTIDE SEQUENCE [MRNA]</scope>
</reference>
<reference key="2">
    <citation type="submission" date="2003-04" db="EMBL/GenBank/DDBJ databases">
        <title>Comparision of rat, dog and human androgen receptors.</title>
        <authorList>
            <person name="Duan W.R."/>
            <person name="Kelce W.R."/>
            <person name="Levin S."/>
            <person name="Blomme E.A.G."/>
        </authorList>
    </citation>
    <scope>NUCLEOTIDE SEQUENCE [MRNA]</scope>
</reference>
<gene>
    <name type="primary">AR</name>
    <name type="synonym">NR3C4</name>
</gene>
<comment type="function">
    <text evidence="2 3">Steroid hormone receptors are ligand-activated transcription factors that regulate eukaryotic gene expression and affect cellular proliferation and differentiation in target tissues. Transcription factor activity is modulated by bound coactivator and corepressor proteins like ZBTB7A that recruits NCOR1 and NCOR2 to the androgen response elements/ARE on target genes, negatively regulating androgen receptor signaling and androgen-induced cell proliferation. Transcription activation is also down-regulated by NR0B2. Activated, but not phosphorylated, by HIPK3 and ZIPK/DAPK3.</text>
</comment>
<comment type="subunit">
    <text evidence="2 3 4">Binds DNA as a homodimer. Part of a ternary complex containing AR, EFCAB6/DJBP and PARK7. Interacts with HIPK3 and NR0B2 in the presence of androgen. The ligand binding domain interacts with KAT7/HBO1 in the presence of dihydrotestosterone. Interacts with EFCAB6/DJBP, PQBP1, RANBP9, RBAK, SPDEF, SRA1, TGFB1I1 and RREB1. Interacts with ZMIZ1/ZIMP10 and ZMIZ2/ZMIP7 which both enhance its transactivation activity. Interacts with SLC30A9 and RAD54L2/ARIP4. Interacts with MACROD1 (via macro domain) (By similarity). Interacts via the ligand-binding domain with LXXLL and FXXLF motifs from NCOA1, NCOA2, NCOA3 and MAGEA11. Interacts (via nuclear receptor DNA binding domain and nuclear receptor ligand binding domain) with NCOA4 (By similarity). The AR N-terminal poly-Gln region binds Ran resulting in enhancement of AR-mediated transactivation. Ran-binding decreases as the poly-Gln length increases. Interacts with HIP1 (via coiled coil domain). Interacts (via ligand-binding domain) with TRIM68. Interacts with TNK2. Interacts with USP26. Interacts with RNF6. Interacts (regulated by RNF6 probably through polyubiquitination) with RNF14; regulates AR transcriptional activity. Interacts with PRMT2 and TRIM24. Interacts with RACK1. Interacts with RANBP10; this interaction enhances dihydrotestosterone-induced AR transcriptional activity. Interacts with PRPF6 in a hormone-independent way; this interaction enhances dihydrotestosterone-induced AR transcriptional activity. Interacts with STK4/MST1. Interacts with ZIPK/DAPK3. Interacts with LPXN. Interacts with MAK. Part of a complex containing AR, MAK and NCOA3. Interacts with CRY1. Interacts with CCAR1 and GATA2. Interacts with ZNF318. Interacts with BUD31. Interacts with ARID4A. Interacts with ARID4B. Interacts (via NR LBD domain) with ZBTB7A; the interaction is direct and androgen-dependent (By similarity). Interacts with NCOR1 (By similarity). Interacts with NCOR2 (By similarity). Interacts witH CRY2 in a ligand-dependent manner (By similarity).</text>
</comment>
<comment type="subcellular location">
    <subcellularLocation>
        <location evidence="2">Nucleus</location>
    </subcellularLocation>
    <subcellularLocation>
        <location evidence="2">Cytoplasm</location>
    </subcellularLocation>
    <text evidence="2">Detected at the promoter of target genes. Predominantly cytoplasmic in unligated form but translocates to the nucleus upon ligand-binding. Can also translocate to the nucleus in unligated form in the presence of RACK1.</text>
</comment>
<comment type="domain">
    <text evidence="1">Composed of three domains: a modulating N-terminal domain, a DNA-binding domain and a C-terminal ligand-binding domain. In the presence of bound steroid the ligand-binding domain interacts with the N-terminal modulating domain, and thereby activates AR transcription factor activity. Agonist binding is required for dimerization and binding to target DNA. The transcription factor activity of the complex formed by ligand-activated AR and DNA is modulated by interactions with coactivator and corepressor proteins. Interaction with RANBP9 is mediated by both the N-terminal domain and the DNA-binding domain. Interaction with EFCAB6/DJBP is mediated by the DNA-binding domain (By similarity).</text>
</comment>
<comment type="PTM">
    <text evidence="2">Phosphorylated in prostate cancer cells in response to several growth factors including EGF. Phosphorylation is induced by c-Src kinase (CSK). Tyr-522 is one of the major phosphorylation sites and an increase in phosphorylation and Src kinase activity is associated with prostate cancer progression (By similarity). Phosphorylation by TNK2 enhances the DNA-binding and transcriptional activity. Phosphorylation at Ser-67 by CDK9 regulates AR promoter selectivity and cell growth (By similarity).</text>
</comment>
<comment type="PTM">
    <text evidence="2">Sumoylated on Lys-389 (major) and Lys-508 (By similarity). Ubiquitinated. Deubiquitinated by USP26 (By similarity). 'Lys-6' and 'Lys-27'-linked polyubiquitination by RNF6 modulates AR transcriptional activity and specificity (By similarity).</text>
</comment>
<comment type="PTM">
    <text evidence="2">Palmitoylated by ZDHHC7 and ZDHHC21. Palmitoylation is required for plasma membrane targeting and for rapid intracellular signaling via ERK and AKT kinases and cAMP generation (By similarity).</text>
</comment>
<comment type="miscellaneous">
    <text>In the absence of ligand, steroid hormone receptors are thought to be weakly associated with nuclear components; hormone binding greatly increases receptor affinity. The hormone-receptor complex appears to recognize discrete DNA sequences upstream of transcriptional start sites.</text>
</comment>
<comment type="miscellaneous">
    <text>Transcriptional activity is enhanced by binding to RANBP9.</text>
</comment>
<comment type="similarity">
    <text evidence="8">Belongs to the nuclear hormone receptor family. NR3 subfamily.</text>
</comment>
<name>ANDR_CANLF</name>
<proteinExistence type="evidence at transcript level"/>
<dbReference type="EMBL" id="AF197950">
    <property type="protein sequence ID" value="AAF18084.1"/>
    <property type="molecule type" value="mRNA"/>
</dbReference>
<dbReference type="EMBL" id="AY271347">
    <property type="protein sequence ID" value="AAQ84563.1"/>
    <property type="molecule type" value="mRNA"/>
</dbReference>
<dbReference type="RefSeq" id="NP_001003053.1">
    <property type="nucleotide sequence ID" value="NM_001003053.1"/>
</dbReference>
<dbReference type="SMR" id="Q9TT90"/>
<dbReference type="FunCoup" id="Q9TT90">
    <property type="interactions" value="225"/>
</dbReference>
<dbReference type="STRING" id="9615.ENSCAFP00000024499"/>
<dbReference type="ChEMBL" id="CHEMBL5303557"/>
<dbReference type="PaxDb" id="9612-ENSCAFP00000024499"/>
<dbReference type="eggNOG" id="KOG3575">
    <property type="taxonomic scope" value="Eukaryota"/>
</dbReference>
<dbReference type="InParanoid" id="Q9TT90"/>
<dbReference type="OrthoDB" id="10032732at2759"/>
<dbReference type="Proteomes" id="UP000002254">
    <property type="component" value="Unplaced"/>
</dbReference>
<dbReference type="Proteomes" id="UP000694429">
    <property type="component" value="Unplaced"/>
</dbReference>
<dbReference type="Proteomes" id="UP000694542">
    <property type="component" value="Unplaced"/>
</dbReference>
<dbReference type="Proteomes" id="UP000805418">
    <property type="component" value="Unplaced"/>
</dbReference>
<dbReference type="GO" id="GO:0000785">
    <property type="term" value="C:chromatin"/>
    <property type="evidence" value="ECO:0000250"/>
    <property type="project" value="UniProtKB"/>
</dbReference>
<dbReference type="GO" id="GO:0005737">
    <property type="term" value="C:cytoplasm"/>
    <property type="evidence" value="ECO:0000250"/>
    <property type="project" value="UniProtKB"/>
</dbReference>
<dbReference type="GO" id="GO:0005634">
    <property type="term" value="C:nucleus"/>
    <property type="evidence" value="ECO:0000250"/>
    <property type="project" value="UniProtKB"/>
</dbReference>
<dbReference type="GO" id="GO:0005497">
    <property type="term" value="F:androgen binding"/>
    <property type="evidence" value="ECO:0000250"/>
    <property type="project" value="UniProtKB"/>
</dbReference>
<dbReference type="GO" id="GO:0008013">
    <property type="term" value="F:beta-catenin binding"/>
    <property type="evidence" value="ECO:0000250"/>
    <property type="project" value="UniProtKB"/>
</dbReference>
<dbReference type="GO" id="GO:0003700">
    <property type="term" value="F:DNA-binding transcription factor activity"/>
    <property type="evidence" value="ECO:0000250"/>
    <property type="project" value="UniProtKB"/>
</dbReference>
<dbReference type="GO" id="GO:0034056">
    <property type="term" value="F:estrogen response element binding"/>
    <property type="evidence" value="ECO:0000318"/>
    <property type="project" value="GO_Central"/>
</dbReference>
<dbReference type="GO" id="GO:0004879">
    <property type="term" value="F:nuclear receptor activity"/>
    <property type="evidence" value="ECO:0000250"/>
    <property type="project" value="UniProtKB"/>
</dbReference>
<dbReference type="GO" id="GO:0005496">
    <property type="term" value="F:steroid binding"/>
    <property type="evidence" value="ECO:0007669"/>
    <property type="project" value="UniProtKB-KW"/>
</dbReference>
<dbReference type="GO" id="GO:0000976">
    <property type="term" value="F:transcription cis-regulatory region binding"/>
    <property type="evidence" value="ECO:0000250"/>
    <property type="project" value="UniProtKB"/>
</dbReference>
<dbReference type="GO" id="GO:0008270">
    <property type="term" value="F:zinc ion binding"/>
    <property type="evidence" value="ECO:0007669"/>
    <property type="project" value="UniProtKB-KW"/>
</dbReference>
<dbReference type="GO" id="GO:0030521">
    <property type="term" value="P:androgen receptor signaling pathway"/>
    <property type="evidence" value="ECO:0000250"/>
    <property type="project" value="UniProtKB"/>
</dbReference>
<dbReference type="GO" id="GO:0030522">
    <property type="term" value="P:intracellular receptor signaling pathway"/>
    <property type="evidence" value="ECO:0000250"/>
    <property type="project" value="UniProtKB"/>
</dbReference>
<dbReference type="GO" id="GO:0008584">
    <property type="term" value="P:male gonad development"/>
    <property type="evidence" value="ECO:0000318"/>
    <property type="project" value="GO_Central"/>
</dbReference>
<dbReference type="GO" id="GO:2001237">
    <property type="term" value="P:negative regulation of extrinsic apoptotic signaling pathway"/>
    <property type="evidence" value="ECO:0000250"/>
    <property type="project" value="UniProtKB"/>
</dbReference>
<dbReference type="GO" id="GO:0030518">
    <property type="term" value="P:nuclear receptor-mediated steroid hormone signaling pathway"/>
    <property type="evidence" value="ECO:0000318"/>
    <property type="project" value="GO_Central"/>
</dbReference>
<dbReference type="GO" id="GO:0008284">
    <property type="term" value="P:positive regulation of cell population proliferation"/>
    <property type="evidence" value="ECO:0000250"/>
    <property type="project" value="UniProtKB"/>
</dbReference>
<dbReference type="GO" id="GO:0010628">
    <property type="term" value="P:positive regulation of gene expression"/>
    <property type="evidence" value="ECO:0000250"/>
    <property type="project" value="UniProtKB"/>
</dbReference>
<dbReference type="GO" id="GO:0045944">
    <property type="term" value="P:positive regulation of transcription by RNA polymerase II"/>
    <property type="evidence" value="ECO:0000250"/>
    <property type="project" value="UniProtKB"/>
</dbReference>
<dbReference type="GO" id="GO:1903076">
    <property type="term" value="P:regulation of protein localization to plasma membrane"/>
    <property type="evidence" value="ECO:0000250"/>
    <property type="project" value="UniProtKB"/>
</dbReference>
<dbReference type="CDD" id="cd07173">
    <property type="entry name" value="NR_DBD_AR"/>
    <property type="match status" value="1"/>
</dbReference>
<dbReference type="CDD" id="cd07073">
    <property type="entry name" value="NR_LBD_AR"/>
    <property type="match status" value="1"/>
</dbReference>
<dbReference type="FunFam" id="3.30.50.10:FF:000024">
    <property type="entry name" value="Androgen receptor"/>
    <property type="match status" value="1"/>
</dbReference>
<dbReference type="FunFam" id="1.10.565.10:FF:000004">
    <property type="entry name" value="Androgen receptor variant"/>
    <property type="match status" value="1"/>
</dbReference>
<dbReference type="Gene3D" id="3.30.50.10">
    <property type="entry name" value="Erythroid Transcription Factor GATA-1, subunit A"/>
    <property type="match status" value="1"/>
</dbReference>
<dbReference type="Gene3D" id="1.10.565.10">
    <property type="entry name" value="Retinoid X Receptor"/>
    <property type="match status" value="1"/>
</dbReference>
<dbReference type="InterPro" id="IPR001103">
    <property type="entry name" value="Andrgn_rcpt"/>
</dbReference>
<dbReference type="InterPro" id="IPR035500">
    <property type="entry name" value="NHR-like_dom_sf"/>
</dbReference>
<dbReference type="InterPro" id="IPR000536">
    <property type="entry name" value="Nucl_hrmn_rcpt_lig-bd"/>
</dbReference>
<dbReference type="InterPro" id="IPR050200">
    <property type="entry name" value="Nuclear_hormone_rcpt_NR3"/>
</dbReference>
<dbReference type="InterPro" id="IPR001628">
    <property type="entry name" value="Znf_hrmn_rcpt"/>
</dbReference>
<dbReference type="InterPro" id="IPR013088">
    <property type="entry name" value="Znf_NHR/GATA"/>
</dbReference>
<dbReference type="PANTHER" id="PTHR48092">
    <property type="entry name" value="KNIRPS-RELATED PROTEIN-RELATED"/>
    <property type="match status" value="1"/>
</dbReference>
<dbReference type="Pfam" id="PF02166">
    <property type="entry name" value="Androgen_recep"/>
    <property type="match status" value="1"/>
</dbReference>
<dbReference type="Pfam" id="PF00104">
    <property type="entry name" value="Hormone_recep"/>
    <property type="match status" value="1"/>
</dbReference>
<dbReference type="Pfam" id="PF00105">
    <property type="entry name" value="zf-C4"/>
    <property type="match status" value="1"/>
</dbReference>
<dbReference type="PRINTS" id="PR00521">
    <property type="entry name" value="ANDROGENR"/>
</dbReference>
<dbReference type="PRINTS" id="PR00047">
    <property type="entry name" value="STROIDFINGER"/>
</dbReference>
<dbReference type="SMART" id="SM00430">
    <property type="entry name" value="HOLI"/>
    <property type="match status" value="1"/>
</dbReference>
<dbReference type="SMART" id="SM00399">
    <property type="entry name" value="ZnF_C4"/>
    <property type="match status" value="1"/>
</dbReference>
<dbReference type="SUPFAM" id="SSF57716">
    <property type="entry name" value="Glucocorticoid receptor-like (DNA-binding domain)"/>
    <property type="match status" value="1"/>
</dbReference>
<dbReference type="SUPFAM" id="SSF48508">
    <property type="entry name" value="Nuclear receptor ligand-binding domain"/>
    <property type="match status" value="1"/>
</dbReference>
<dbReference type="PROSITE" id="PS51843">
    <property type="entry name" value="NR_LBD"/>
    <property type="match status" value="1"/>
</dbReference>
<dbReference type="PROSITE" id="PS00031">
    <property type="entry name" value="NUCLEAR_REC_DBD_1"/>
    <property type="match status" value="1"/>
</dbReference>
<dbReference type="PROSITE" id="PS51030">
    <property type="entry name" value="NUCLEAR_REC_DBD_2"/>
    <property type="match status" value="1"/>
</dbReference>